<protein>
    <recommendedName>
        <fullName evidence="1">Eukaryotic translation initiation factor 3 subunit K</fullName>
        <shortName evidence="1">eIF3k</shortName>
    </recommendedName>
    <alternativeName>
        <fullName evidence="1">eIF-3 p25</fullName>
    </alternativeName>
</protein>
<comment type="function">
    <text evidence="1">Component of the eukaryotic translation initiation factor 3 (eIF-3) complex, which is involved in protein synthesis of a specialized repertoire of mRNAs and, together with other initiation factors, stimulates binding of mRNA and methionyl-tRNAi to the 40S ribosome. The eIF-3 complex specifically targets and initiates translation of a subset of mRNAs involved in cell proliferation.</text>
</comment>
<comment type="subunit">
    <text evidence="1">Component of the eukaryotic translation initiation factor 3 (eIF-3) complex.</text>
</comment>
<comment type="subcellular location">
    <subcellularLocation>
        <location evidence="1">Cytoplasm</location>
    </subcellularLocation>
</comment>
<comment type="similarity">
    <text evidence="1">Belongs to the eIF-3 subunit K family.</text>
</comment>
<accession>P0CN55</accession>
<accession>Q55TQ4</accession>
<accession>Q5KIN1</accession>
<sequence>MVTAVSPENLKEWHTPSTRPDVIHELIHGVDRYNPSNLPFMEDYLATELKEGQYDLFGNLAILKLYQFNPQHSNPDVIINILIKALAATVSGPDFNLCLEMLREPSAILHDIESADEALVIVMPYLQRLHELSRTCQFTKFWQEINSDSEAAKILRTRYLPQHASPLDDFRFIFSASIASCFRRISLSQLSRWLDIPSDKVGEWCSKVEWTVEGQDAVIPNNGQNDVKAGVVKENVQLGQLTKLVAAAGY</sequence>
<feature type="chain" id="PRO_0000410081" description="Eukaryotic translation initiation factor 3 subunit K">
    <location>
        <begin position="1"/>
        <end position="250"/>
    </location>
</feature>
<feature type="domain" description="PCI" evidence="2">
    <location>
        <begin position="54"/>
        <end position="235"/>
    </location>
</feature>
<reference key="1">
    <citation type="journal article" date="2005" name="Science">
        <title>The genome of the basidiomycetous yeast and human pathogen Cryptococcus neoformans.</title>
        <authorList>
            <person name="Loftus B.J."/>
            <person name="Fung E."/>
            <person name="Roncaglia P."/>
            <person name="Rowley D."/>
            <person name="Amedeo P."/>
            <person name="Bruno D."/>
            <person name="Vamathevan J."/>
            <person name="Miranda M."/>
            <person name="Anderson I.J."/>
            <person name="Fraser J.A."/>
            <person name="Allen J.E."/>
            <person name="Bosdet I.E."/>
            <person name="Brent M.R."/>
            <person name="Chiu R."/>
            <person name="Doering T.L."/>
            <person name="Donlin M.J."/>
            <person name="D'Souza C.A."/>
            <person name="Fox D.S."/>
            <person name="Grinberg V."/>
            <person name="Fu J."/>
            <person name="Fukushima M."/>
            <person name="Haas B.J."/>
            <person name="Huang J.C."/>
            <person name="Janbon G."/>
            <person name="Jones S.J.M."/>
            <person name="Koo H.L."/>
            <person name="Krzywinski M.I."/>
            <person name="Kwon-Chung K.J."/>
            <person name="Lengeler K.B."/>
            <person name="Maiti R."/>
            <person name="Marra M.A."/>
            <person name="Marra R.E."/>
            <person name="Mathewson C.A."/>
            <person name="Mitchell T.G."/>
            <person name="Pertea M."/>
            <person name="Riggs F.R."/>
            <person name="Salzberg S.L."/>
            <person name="Schein J.E."/>
            <person name="Shvartsbeyn A."/>
            <person name="Shin H."/>
            <person name="Shumway M."/>
            <person name="Specht C.A."/>
            <person name="Suh B.B."/>
            <person name="Tenney A."/>
            <person name="Utterback T.R."/>
            <person name="Wickes B.L."/>
            <person name="Wortman J.R."/>
            <person name="Wye N.H."/>
            <person name="Kronstad J.W."/>
            <person name="Lodge J.K."/>
            <person name="Heitman J."/>
            <person name="Davis R.W."/>
            <person name="Fraser C.M."/>
            <person name="Hyman R.W."/>
        </authorList>
    </citation>
    <scope>NUCLEOTIDE SEQUENCE [LARGE SCALE GENOMIC DNA]</scope>
    <source>
        <strain>B-3501A</strain>
    </source>
</reference>
<organism>
    <name type="scientific">Cryptococcus neoformans var. neoformans serotype D (strain B-3501A)</name>
    <name type="common">Filobasidiella neoformans</name>
    <dbReference type="NCBI Taxonomy" id="283643"/>
    <lineage>
        <taxon>Eukaryota</taxon>
        <taxon>Fungi</taxon>
        <taxon>Dikarya</taxon>
        <taxon>Basidiomycota</taxon>
        <taxon>Agaricomycotina</taxon>
        <taxon>Tremellomycetes</taxon>
        <taxon>Tremellales</taxon>
        <taxon>Cryptococcaceae</taxon>
        <taxon>Cryptococcus</taxon>
        <taxon>Cryptococcus neoformans species complex</taxon>
    </lineage>
</organism>
<name>EIF3K_CRYNB</name>
<gene>
    <name type="ordered locus">CNBD3990</name>
</gene>
<evidence type="ECO:0000255" key="1">
    <source>
        <dbReference type="HAMAP-Rule" id="MF_03010"/>
    </source>
</evidence>
<evidence type="ECO:0000255" key="2">
    <source>
        <dbReference type="PROSITE-ProRule" id="PRU01185"/>
    </source>
</evidence>
<dbReference type="EMBL" id="AAEY01000021">
    <property type="protein sequence ID" value="EAL21023.1"/>
    <property type="molecule type" value="Genomic_DNA"/>
</dbReference>
<dbReference type="RefSeq" id="XP_775670.1">
    <property type="nucleotide sequence ID" value="XM_770577.1"/>
</dbReference>
<dbReference type="SMR" id="P0CN55"/>
<dbReference type="EnsemblFungi" id="AAW42958">
    <property type="protein sequence ID" value="AAW42958"/>
    <property type="gene ID" value="CND02370"/>
</dbReference>
<dbReference type="GeneID" id="4935788"/>
<dbReference type="KEGG" id="cnb:CNBD3990"/>
<dbReference type="VEuPathDB" id="FungiDB:CNBD3990"/>
<dbReference type="HOGENOM" id="CLU_076723_0_0_1"/>
<dbReference type="OrthoDB" id="3219at5206"/>
<dbReference type="GO" id="GO:0016282">
    <property type="term" value="C:eukaryotic 43S preinitiation complex"/>
    <property type="evidence" value="ECO:0007669"/>
    <property type="project" value="UniProtKB-UniRule"/>
</dbReference>
<dbReference type="GO" id="GO:0033290">
    <property type="term" value="C:eukaryotic 48S preinitiation complex"/>
    <property type="evidence" value="ECO:0007669"/>
    <property type="project" value="UniProtKB-UniRule"/>
</dbReference>
<dbReference type="GO" id="GO:0005852">
    <property type="term" value="C:eukaryotic translation initiation factor 3 complex"/>
    <property type="evidence" value="ECO:0007669"/>
    <property type="project" value="UniProtKB-UniRule"/>
</dbReference>
<dbReference type="GO" id="GO:0043022">
    <property type="term" value="F:ribosome binding"/>
    <property type="evidence" value="ECO:0007669"/>
    <property type="project" value="InterPro"/>
</dbReference>
<dbReference type="GO" id="GO:0003723">
    <property type="term" value="F:RNA binding"/>
    <property type="evidence" value="ECO:0007669"/>
    <property type="project" value="UniProtKB-UniRule"/>
</dbReference>
<dbReference type="GO" id="GO:0003743">
    <property type="term" value="F:translation initiation factor activity"/>
    <property type="evidence" value="ECO:0007669"/>
    <property type="project" value="UniProtKB-UniRule"/>
</dbReference>
<dbReference type="GO" id="GO:0001732">
    <property type="term" value="P:formation of cytoplasmic translation initiation complex"/>
    <property type="evidence" value="ECO:0007669"/>
    <property type="project" value="UniProtKB-UniRule"/>
</dbReference>
<dbReference type="GO" id="GO:0006446">
    <property type="term" value="P:regulation of translational initiation"/>
    <property type="evidence" value="ECO:0007669"/>
    <property type="project" value="InterPro"/>
</dbReference>
<dbReference type="FunFam" id="1.25.40.250:FF:000001">
    <property type="entry name" value="Eukaryotic translation initiation factor 3 subunit K"/>
    <property type="match status" value="1"/>
</dbReference>
<dbReference type="Gene3D" id="1.25.40.250">
    <property type="entry name" value="ARM repeat, domain 1"/>
    <property type="match status" value="1"/>
</dbReference>
<dbReference type="Gene3D" id="1.10.10.10">
    <property type="entry name" value="Winged helix-like DNA-binding domain superfamily/Winged helix DNA-binding domain"/>
    <property type="match status" value="1"/>
</dbReference>
<dbReference type="HAMAP" id="MF_03010">
    <property type="entry name" value="eIF3k"/>
    <property type="match status" value="1"/>
</dbReference>
<dbReference type="InterPro" id="IPR016024">
    <property type="entry name" value="ARM-type_fold"/>
</dbReference>
<dbReference type="InterPro" id="IPR033464">
    <property type="entry name" value="CSN8_PSD8_EIF3K"/>
</dbReference>
<dbReference type="InterPro" id="IPR009374">
    <property type="entry name" value="eIF3k"/>
</dbReference>
<dbReference type="InterPro" id="IPR000717">
    <property type="entry name" value="PCI_dom"/>
</dbReference>
<dbReference type="InterPro" id="IPR016020">
    <property type="entry name" value="Transl_init_fac_sub12_N_euk"/>
</dbReference>
<dbReference type="InterPro" id="IPR036388">
    <property type="entry name" value="WH-like_DNA-bd_sf"/>
</dbReference>
<dbReference type="InterPro" id="IPR036390">
    <property type="entry name" value="WH_DNA-bd_sf"/>
</dbReference>
<dbReference type="PANTHER" id="PTHR13022">
    <property type="entry name" value="EUKARYOTIC TRANSLATION INITIATION FACTOR 3 SUBUNIT 11"/>
    <property type="match status" value="1"/>
</dbReference>
<dbReference type="PANTHER" id="PTHR13022:SF0">
    <property type="entry name" value="EUKARYOTIC TRANSLATION INITIATION FACTOR 3 SUBUNIT K"/>
    <property type="match status" value="1"/>
</dbReference>
<dbReference type="Pfam" id="PF10075">
    <property type="entry name" value="CSN8_PSD8_EIF3K"/>
    <property type="match status" value="1"/>
</dbReference>
<dbReference type="SUPFAM" id="SSF48371">
    <property type="entry name" value="ARM repeat"/>
    <property type="match status" value="1"/>
</dbReference>
<dbReference type="SUPFAM" id="SSF46785">
    <property type="entry name" value="Winged helix' DNA-binding domain"/>
    <property type="match status" value="1"/>
</dbReference>
<dbReference type="PROSITE" id="PS50250">
    <property type="entry name" value="PCI"/>
    <property type="match status" value="1"/>
</dbReference>
<keyword id="KW-0963">Cytoplasm</keyword>
<keyword id="KW-0396">Initiation factor</keyword>
<keyword id="KW-0648">Protein biosynthesis</keyword>
<proteinExistence type="inferred from homology"/>